<proteinExistence type="evidence at protein level"/>
<evidence type="ECO:0000305" key="1"/>
<comment type="function">
    <text>Electron carrier protein. The oxidized form of the cytochrome c heme group can accept an electron from the heme group of the cytochrome c1 subunit of cytochrome reductase. Cytochrome c then transfers this electron to the cytochrome oxidase complex, the final protein carrier in the mitochondrial electron-transport chain.</text>
</comment>
<comment type="subcellular location">
    <subcellularLocation>
        <location>Mitochondrion intermembrane space</location>
    </subcellularLocation>
    <text>Loosely associated with the inner membrane.</text>
</comment>
<comment type="PTM">
    <text>Binds 1 heme c group covalently per subunit.</text>
</comment>
<comment type="similarity">
    <text evidence="1">Belongs to the cytochrome c family.</text>
</comment>
<comment type="online information" name="Protein Spotlight">
    <link uri="https://www.proteinspotlight.org/back_issues/076"/>
    <text>Life shuttle - Issue 76 of November 2006</text>
</comment>
<organism>
    <name type="scientific">Zea mays</name>
    <name type="common">Maize</name>
    <dbReference type="NCBI Taxonomy" id="4577"/>
    <lineage>
        <taxon>Eukaryota</taxon>
        <taxon>Viridiplantae</taxon>
        <taxon>Streptophyta</taxon>
        <taxon>Embryophyta</taxon>
        <taxon>Tracheophyta</taxon>
        <taxon>Spermatophyta</taxon>
        <taxon>Magnoliopsida</taxon>
        <taxon>Liliopsida</taxon>
        <taxon>Poales</taxon>
        <taxon>Poaceae</taxon>
        <taxon>PACMAD clade</taxon>
        <taxon>Panicoideae</taxon>
        <taxon>Andropogonodae</taxon>
        <taxon>Andropogoneae</taxon>
        <taxon>Tripsacinae</taxon>
        <taxon>Zea</taxon>
    </lineage>
</organism>
<name>CYC_MAIZE</name>
<protein>
    <recommendedName>
        <fullName>Cytochrome c</fullName>
    </recommendedName>
</protein>
<keyword id="KW-0903">Direct protein sequencing</keyword>
<keyword id="KW-0249">Electron transport</keyword>
<keyword id="KW-0349">Heme</keyword>
<keyword id="KW-0408">Iron</keyword>
<keyword id="KW-0479">Metal-binding</keyword>
<keyword id="KW-0496">Mitochondrion</keyword>
<keyword id="KW-1185">Reference proteome</keyword>
<keyword id="KW-0679">Respiratory chain</keyword>
<keyword id="KW-0813">Transport</keyword>
<feature type="chain" id="PRO_0000108301" description="Cytochrome c">
    <location>
        <begin position="1"/>
        <end position="111"/>
    </location>
</feature>
<feature type="binding site" description="covalent">
    <location>
        <position position="22"/>
    </location>
    <ligand>
        <name>heme c</name>
        <dbReference type="ChEBI" id="CHEBI:61717"/>
    </ligand>
</feature>
<feature type="binding site" description="covalent">
    <location>
        <position position="25"/>
    </location>
    <ligand>
        <name>heme c</name>
        <dbReference type="ChEBI" id="CHEBI:61717"/>
    </ligand>
</feature>
<feature type="binding site" description="axial binding residue">
    <location>
        <position position="26"/>
    </location>
    <ligand>
        <name>heme c</name>
        <dbReference type="ChEBI" id="CHEBI:61717"/>
    </ligand>
    <ligandPart>
        <name>Fe</name>
        <dbReference type="ChEBI" id="CHEBI:18248"/>
    </ligandPart>
</feature>
<feature type="binding site" description="axial binding residue">
    <location>
        <position position="88"/>
    </location>
    <ligand>
        <name>heme c</name>
        <dbReference type="ChEBI" id="CHEBI:61717"/>
    </ligand>
    <ligandPart>
        <name>Fe</name>
        <dbReference type="ChEBI" id="CHEBI:18248"/>
    </ligandPart>
</feature>
<sequence length="111" mass="12015">ASFSEAPPGNPKAGEKIFKTKCAQCHTVEKGAGHKQGPNLNGLFGRQSGTTAGYSYSAANKNKAVVWEENTLYDYLLNPXKYIPGTKMVFPGLXKPQERADLIAYLKEATA</sequence>
<reference key="1">
    <citation type="book" date="1976" name="Handbook of biochemistry and molecular biology (3rd ed.)">
        <title>Amino acid sequences of eukaryotic cytochromes c.</title>
        <editorList>
            <person name="Fasman G.D."/>
        </editorList>
        <authorList>
            <person name="Dickerson R.E."/>
            <person name="Timkovich R."/>
        </authorList>
    </citation>
    <scope>PROTEIN SEQUENCE</scope>
</reference>
<accession>P00056</accession>
<dbReference type="PIR" id="A00049">
    <property type="entry name" value="CCZM"/>
</dbReference>
<dbReference type="STRING" id="4577.P00056"/>
<dbReference type="PaxDb" id="4577-GRMZM2G010348_P01"/>
<dbReference type="MaizeGDB" id="69233"/>
<dbReference type="eggNOG" id="KOG3453">
    <property type="taxonomic scope" value="Eukaryota"/>
</dbReference>
<dbReference type="InParanoid" id="P00056"/>
<dbReference type="PRO" id="PR:P00056"/>
<dbReference type="Proteomes" id="UP000007305">
    <property type="component" value="Unplaced"/>
</dbReference>
<dbReference type="ExpressionAtlas" id="P00056">
    <property type="expression patterns" value="baseline and differential"/>
</dbReference>
<dbReference type="GO" id="GO:0005758">
    <property type="term" value="C:mitochondrial intermembrane space"/>
    <property type="evidence" value="ECO:0000318"/>
    <property type="project" value="GO_Central"/>
</dbReference>
<dbReference type="GO" id="GO:0009055">
    <property type="term" value="F:electron transfer activity"/>
    <property type="evidence" value="ECO:0000318"/>
    <property type="project" value="GO_Central"/>
</dbReference>
<dbReference type="GO" id="GO:0020037">
    <property type="term" value="F:heme binding"/>
    <property type="evidence" value="ECO:0007669"/>
    <property type="project" value="InterPro"/>
</dbReference>
<dbReference type="GO" id="GO:0046872">
    <property type="term" value="F:metal ion binding"/>
    <property type="evidence" value="ECO:0007669"/>
    <property type="project" value="UniProtKB-KW"/>
</dbReference>
<dbReference type="GO" id="GO:0006123">
    <property type="term" value="P:mitochondrial electron transport, cytochrome c to oxygen"/>
    <property type="evidence" value="ECO:0000318"/>
    <property type="project" value="GO_Central"/>
</dbReference>
<dbReference type="GO" id="GO:0006122">
    <property type="term" value="P:mitochondrial electron transport, ubiquinol to cytochrome c"/>
    <property type="evidence" value="ECO:0000318"/>
    <property type="project" value="GO_Central"/>
</dbReference>
<dbReference type="FunFam" id="1.10.760.10:FF:000001">
    <property type="entry name" value="Cytochrome c iso-1"/>
    <property type="match status" value="1"/>
</dbReference>
<dbReference type="Gene3D" id="1.10.760.10">
    <property type="entry name" value="Cytochrome c-like domain"/>
    <property type="match status" value="1"/>
</dbReference>
<dbReference type="InterPro" id="IPR009056">
    <property type="entry name" value="Cyt_c-like_dom"/>
</dbReference>
<dbReference type="InterPro" id="IPR036909">
    <property type="entry name" value="Cyt_c-like_dom_sf"/>
</dbReference>
<dbReference type="InterPro" id="IPR002327">
    <property type="entry name" value="Cyt_c_1A/1B"/>
</dbReference>
<dbReference type="PANTHER" id="PTHR11961">
    <property type="entry name" value="CYTOCHROME C"/>
    <property type="match status" value="1"/>
</dbReference>
<dbReference type="Pfam" id="PF00034">
    <property type="entry name" value="Cytochrom_C"/>
    <property type="match status" value="1"/>
</dbReference>
<dbReference type="PRINTS" id="PR00604">
    <property type="entry name" value="CYTCHRMECIAB"/>
</dbReference>
<dbReference type="SUPFAM" id="SSF46626">
    <property type="entry name" value="Cytochrome c"/>
    <property type="match status" value="1"/>
</dbReference>
<dbReference type="PROSITE" id="PS51007">
    <property type="entry name" value="CYTC"/>
    <property type="match status" value="1"/>
</dbReference>